<evidence type="ECO:0000250" key="1"/>
<evidence type="ECO:0000305" key="2"/>
<feature type="initiator methionine" description="Removed" evidence="1">
    <location>
        <position position="1"/>
    </location>
</feature>
<feature type="chain" id="PRO_0000154704" description="Large ribosomal subunit protein uL10">
    <location>
        <begin position="2"/>
        <end position="165"/>
    </location>
</feature>
<feature type="modified residue" description="N6-acetyllysine" evidence="1">
    <location>
        <position position="37"/>
    </location>
</feature>
<feature type="modified residue" description="N6-acetyllysine" evidence="1">
    <location>
        <position position="105"/>
    </location>
</feature>
<keyword id="KW-0007">Acetylation</keyword>
<keyword id="KW-1185">Reference proteome</keyword>
<keyword id="KW-0678">Repressor</keyword>
<keyword id="KW-0687">Ribonucleoprotein</keyword>
<keyword id="KW-0689">Ribosomal protein</keyword>
<keyword id="KW-0694">RNA-binding</keyword>
<keyword id="KW-0699">rRNA-binding</keyword>
<keyword id="KW-0810">Translation regulation</keyword>
<accession>P0A7J6</accession>
<accession>P02408</accession>
<reference key="1">
    <citation type="journal article" date="2002" name="Nucleic Acids Res.">
        <title>Genome sequence of Shigella flexneri 2a: insights into pathogenicity through comparison with genomes of Escherichia coli K12 and O157.</title>
        <authorList>
            <person name="Jin Q."/>
            <person name="Yuan Z."/>
            <person name="Xu J."/>
            <person name="Wang Y."/>
            <person name="Shen Y."/>
            <person name="Lu W."/>
            <person name="Wang J."/>
            <person name="Liu H."/>
            <person name="Yang J."/>
            <person name="Yang F."/>
            <person name="Zhang X."/>
            <person name="Zhang J."/>
            <person name="Yang G."/>
            <person name="Wu H."/>
            <person name="Qu D."/>
            <person name="Dong J."/>
            <person name="Sun L."/>
            <person name="Xue Y."/>
            <person name="Zhao A."/>
            <person name="Gao Y."/>
            <person name="Zhu J."/>
            <person name="Kan B."/>
            <person name="Ding K."/>
            <person name="Chen S."/>
            <person name="Cheng H."/>
            <person name="Yao Z."/>
            <person name="He B."/>
            <person name="Chen R."/>
            <person name="Ma D."/>
            <person name="Qiang B."/>
            <person name="Wen Y."/>
            <person name="Hou Y."/>
            <person name="Yu J."/>
        </authorList>
    </citation>
    <scope>NUCLEOTIDE SEQUENCE [LARGE SCALE GENOMIC DNA]</scope>
    <source>
        <strain>301 / Serotype 2a</strain>
    </source>
</reference>
<reference key="2">
    <citation type="journal article" date="2003" name="Infect. Immun.">
        <title>Complete genome sequence and comparative genomics of Shigella flexneri serotype 2a strain 2457T.</title>
        <authorList>
            <person name="Wei J."/>
            <person name="Goldberg M.B."/>
            <person name="Burland V."/>
            <person name="Venkatesan M.M."/>
            <person name="Deng W."/>
            <person name="Fournier G."/>
            <person name="Mayhew G.F."/>
            <person name="Plunkett G. III"/>
            <person name="Rose D.J."/>
            <person name="Darling A."/>
            <person name="Mau B."/>
            <person name="Perna N.T."/>
            <person name="Payne S.M."/>
            <person name="Runyen-Janecky L.J."/>
            <person name="Zhou S."/>
            <person name="Schwartz D.C."/>
            <person name="Blattner F.R."/>
        </authorList>
    </citation>
    <scope>NUCLEOTIDE SEQUENCE [LARGE SCALE GENOMIC DNA]</scope>
    <source>
        <strain>ATCC 700930 / 2457T / Serotype 2a</strain>
    </source>
</reference>
<dbReference type="EMBL" id="AE005674">
    <property type="protein sequence ID" value="AAN45487.1"/>
    <property type="molecule type" value="Genomic_DNA"/>
</dbReference>
<dbReference type="EMBL" id="AE014073">
    <property type="protein sequence ID" value="AAP18714.1"/>
    <property type="molecule type" value="Genomic_DNA"/>
</dbReference>
<dbReference type="RefSeq" id="NP_709780.1">
    <property type="nucleotide sequence ID" value="NC_004337.2"/>
</dbReference>
<dbReference type="RefSeq" id="WP_001207201.1">
    <property type="nucleotide sequence ID" value="NZ_WPGW01000040.1"/>
</dbReference>
<dbReference type="SMR" id="P0A7J6"/>
<dbReference type="STRING" id="198214.SF4058"/>
<dbReference type="DrugBank" id="DB01211">
    <property type="generic name" value="Clarithromycin"/>
</dbReference>
<dbReference type="DrugBank" id="DB01369">
    <property type="generic name" value="Quinupristin"/>
</dbReference>
<dbReference type="DrugBank" id="DB00778">
    <property type="generic name" value="Roxithromycin"/>
</dbReference>
<dbReference type="PaxDb" id="198214-SF4058"/>
<dbReference type="GeneID" id="1025180"/>
<dbReference type="GeneID" id="93777909"/>
<dbReference type="KEGG" id="sfl:SF4058"/>
<dbReference type="KEGG" id="sfx:S3677"/>
<dbReference type="PATRIC" id="fig|198214.7.peg.4781"/>
<dbReference type="HOGENOM" id="CLU_092227_0_2_6"/>
<dbReference type="Proteomes" id="UP000001006">
    <property type="component" value="Chromosome"/>
</dbReference>
<dbReference type="Proteomes" id="UP000002673">
    <property type="component" value="Chromosome"/>
</dbReference>
<dbReference type="GO" id="GO:0015934">
    <property type="term" value="C:large ribosomal subunit"/>
    <property type="evidence" value="ECO:0007669"/>
    <property type="project" value="InterPro"/>
</dbReference>
<dbReference type="GO" id="GO:0070180">
    <property type="term" value="F:large ribosomal subunit rRNA binding"/>
    <property type="evidence" value="ECO:0007669"/>
    <property type="project" value="UniProtKB-UniRule"/>
</dbReference>
<dbReference type="GO" id="GO:0003735">
    <property type="term" value="F:structural constituent of ribosome"/>
    <property type="evidence" value="ECO:0007669"/>
    <property type="project" value="InterPro"/>
</dbReference>
<dbReference type="GO" id="GO:0006417">
    <property type="term" value="P:regulation of translation"/>
    <property type="evidence" value="ECO:0007669"/>
    <property type="project" value="UniProtKB-KW"/>
</dbReference>
<dbReference type="GO" id="GO:0006412">
    <property type="term" value="P:translation"/>
    <property type="evidence" value="ECO:0007669"/>
    <property type="project" value="UniProtKB-UniRule"/>
</dbReference>
<dbReference type="CDD" id="cd05797">
    <property type="entry name" value="Ribosomal_L10"/>
    <property type="match status" value="1"/>
</dbReference>
<dbReference type="FunFam" id="3.30.70.1730:FF:000001">
    <property type="entry name" value="50S ribosomal protein L10"/>
    <property type="match status" value="1"/>
</dbReference>
<dbReference type="Gene3D" id="3.30.70.1730">
    <property type="match status" value="1"/>
</dbReference>
<dbReference type="Gene3D" id="6.10.250.2350">
    <property type="match status" value="1"/>
</dbReference>
<dbReference type="HAMAP" id="MF_00362">
    <property type="entry name" value="Ribosomal_uL10"/>
    <property type="match status" value="1"/>
</dbReference>
<dbReference type="InterPro" id="IPR001790">
    <property type="entry name" value="Ribosomal_uL10"/>
</dbReference>
<dbReference type="InterPro" id="IPR043141">
    <property type="entry name" value="Ribosomal_uL10-like_sf"/>
</dbReference>
<dbReference type="InterPro" id="IPR022973">
    <property type="entry name" value="Ribosomal_uL10_bac"/>
</dbReference>
<dbReference type="InterPro" id="IPR047865">
    <property type="entry name" value="Ribosomal_uL10_bac_type"/>
</dbReference>
<dbReference type="InterPro" id="IPR002363">
    <property type="entry name" value="Ribosomal_uL10_CS_bac"/>
</dbReference>
<dbReference type="NCBIfam" id="NF000955">
    <property type="entry name" value="PRK00099.1-1"/>
    <property type="match status" value="1"/>
</dbReference>
<dbReference type="PANTHER" id="PTHR11560">
    <property type="entry name" value="39S RIBOSOMAL PROTEIN L10, MITOCHONDRIAL"/>
    <property type="match status" value="1"/>
</dbReference>
<dbReference type="Pfam" id="PF00466">
    <property type="entry name" value="Ribosomal_L10"/>
    <property type="match status" value="1"/>
</dbReference>
<dbReference type="SUPFAM" id="SSF160369">
    <property type="entry name" value="Ribosomal protein L10-like"/>
    <property type="match status" value="1"/>
</dbReference>
<dbReference type="PROSITE" id="PS01109">
    <property type="entry name" value="RIBOSOMAL_L10"/>
    <property type="match status" value="1"/>
</dbReference>
<organism>
    <name type="scientific">Shigella flexneri</name>
    <dbReference type="NCBI Taxonomy" id="623"/>
    <lineage>
        <taxon>Bacteria</taxon>
        <taxon>Pseudomonadati</taxon>
        <taxon>Pseudomonadota</taxon>
        <taxon>Gammaproteobacteria</taxon>
        <taxon>Enterobacterales</taxon>
        <taxon>Enterobacteriaceae</taxon>
        <taxon>Shigella</taxon>
    </lineage>
</organism>
<comment type="function">
    <text evidence="1">Protein L10 is also a translational repressor protein. It controls the translation of the rplJL-rpoBC operon by binding to its mRNA (By similarity).</text>
</comment>
<comment type="function">
    <text evidence="1">Forms part of the ribosomal stalk, playing a central role in the interaction of the ribosome with GTP-bound translation factors.</text>
</comment>
<comment type="subunit">
    <text evidence="1">Part of the ribosomal stalk of the 50S ribosomal subunit. The N-terminus interacts with L11 and the large rRNA to form the base of the stalk. The C-terminus forms an elongated spine to which L12 dimers bind in a sequential fashion forming a multimeric L10(L12)X complex (By similarity).</text>
</comment>
<comment type="miscellaneous">
    <text evidence="1">Ribosomal protein L8 appears to be an aggregate of ribosomal proteins L7/L12 and L10.</text>
</comment>
<comment type="similarity">
    <text evidence="2">Belongs to the universal ribosomal protein uL10 family.</text>
</comment>
<gene>
    <name type="primary">rplJ</name>
    <name type="ordered locus">SF4058</name>
    <name type="ordered locus">S3677</name>
</gene>
<sequence>MALNLQDKQAIVAEVSEVAKGALSAVVADSRGVTVDKMTELRKAGREAGVYMRVVRNTLLRRAVEGTPFECLKDAFVGPTLIAYSMEHPGAAARLFKEFAKANAKFEVKAAAFEGELIPASQIDRLATLPTYEEAIARLMATMKEASAGKLVRTLAAVRDAKEAA</sequence>
<protein>
    <recommendedName>
        <fullName evidence="2">Large ribosomal subunit protein uL10</fullName>
    </recommendedName>
    <alternativeName>
        <fullName>50S ribosomal protein L10</fullName>
    </alternativeName>
</protein>
<name>RL10_SHIFL</name>
<proteinExistence type="inferred from homology"/>